<dbReference type="EMBL" id="CU329671">
    <property type="protein sequence ID" value="CAA20427.1"/>
    <property type="molecule type" value="Genomic_DNA"/>
</dbReference>
<dbReference type="PIR" id="T39706">
    <property type="entry name" value="S67389"/>
</dbReference>
<dbReference type="RefSeq" id="NP_596385.1">
    <property type="nucleotide sequence ID" value="NM_001022306.2"/>
</dbReference>
<dbReference type="SMR" id="Q10205"/>
<dbReference type="BioGRID" id="276722">
    <property type="interactions" value="17"/>
</dbReference>
<dbReference type="ComplexPortal" id="CPX-8914">
    <property type="entry name" value="Nucleolar exosome complex"/>
</dbReference>
<dbReference type="FunCoup" id="Q10205">
    <property type="interactions" value="631"/>
</dbReference>
<dbReference type="STRING" id="284812.Q10205"/>
<dbReference type="iPTMnet" id="Q10205"/>
<dbReference type="PaxDb" id="4896-SPBC17D1.03c.1"/>
<dbReference type="EnsemblFungi" id="SPBC17D1.03c.1">
    <property type="protein sequence ID" value="SPBC17D1.03c.1:pep"/>
    <property type="gene ID" value="SPBC17D1.03c"/>
</dbReference>
<dbReference type="GeneID" id="2540189"/>
<dbReference type="KEGG" id="spo:2540189"/>
<dbReference type="PomBase" id="SPBC17D1.03c">
    <property type="gene designation" value="rrp43"/>
</dbReference>
<dbReference type="VEuPathDB" id="FungiDB:SPBC17D1.03c"/>
<dbReference type="eggNOG" id="KOG1613">
    <property type="taxonomic scope" value="Eukaryota"/>
</dbReference>
<dbReference type="HOGENOM" id="CLU_038194_3_1_1"/>
<dbReference type="InParanoid" id="Q10205"/>
<dbReference type="OMA" id="EIKAFWV"/>
<dbReference type="PhylomeDB" id="Q10205"/>
<dbReference type="Reactome" id="R-SPO-429958">
    <property type="pathway name" value="mRNA decay by 3' to 5' exoribonuclease"/>
</dbReference>
<dbReference type="Reactome" id="R-SPO-6791226">
    <property type="pathway name" value="Major pathway of rRNA processing in the nucleolus and cytosol"/>
</dbReference>
<dbReference type="PRO" id="PR:Q10205"/>
<dbReference type="Proteomes" id="UP000002485">
    <property type="component" value="Chromosome II"/>
</dbReference>
<dbReference type="GO" id="GO:0000177">
    <property type="term" value="C:cytoplasmic exosome (RNase complex)"/>
    <property type="evidence" value="ECO:0000318"/>
    <property type="project" value="GO_Central"/>
</dbReference>
<dbReference type="GO" id="GO:0005829">
    <property type="term" value="C:cytosol"/>
    <property type="evidence" value="ECO:0007005"/>
    <property type="project" value="PomBase"/>
</dbReference>
<dbReference type="GO" id="GO:0000178">
    <property type="term" value="C:exosome (RNase complex)"/>
    <property type="evidence" value="ECO:0000314"/>
    <property type="project" value="PomBase"/>
</dbReference>
<dbReference type="GO" id="GO:0000176">
    <property type="term" value="C:nuclear exosome (RNase complex)"/>
    <property type="evidence" value="ECO:0000269"/>
    <property type="project" value="PomBase"/>
</dbReference>
<dbReference type="GO" id="GO:0005730">
    <property type="term" value="C:nucleolus"/>
    <property type="evidence" value="ECO:0007005"/>
    <property type="project" value="PomBase"/>
</dbReference>
<dbReference type="GO" id="GO:0005634">
    <property type="term" value="C:nucleus"/>
    <property type="evidence" value="ECO:0007005"/>
    <property type="project" value="PomBase"/>
</dbReference>
<dbReference type="GO" id="GO:0000175">
    <property type="term" value="F:3'-5'-RNA exonuclease activity"/>
    <property type="evidence" value="ECO:0000266"/>
    <property type="project" value="PomBase"/>
</dbReference>
<dbReference type="GO" id="GO:0035925">
    <property type="term" value="F:mRNA 3'-UTR AU-rich region binding"/>
    <property type="evidence" value="ECO:0000318"/>
    <property type="project" value="GO_Central"/>
</dbReference>
<dbReference type="GO" id="GO:0000467">
    <property type="term" value="P:exonucleolytic trimming to generate mature 3'-end of 5.8S rRNA from tricistronic rRNA transcript (SSU-rRNA, 5.8S rRNA, LSU-rRNA)"/>
    <property type="evidence" value="ECO:0000318"/>
    <property type="project" value="GO_Central"/>
</dbReference>
<dbReference type="GO" id="GO:0070651">
    <property type="term" value="P:nonfunctional rRNA decay"/>
    <property type="evidence" value="ECO:0000266"/>
    <property type="project" value="PomBase"/>
</dbReference>
<dbReference type="GO" id="GO:0071028">
    <property type="term" value="P:nuclear mRNA surveillance"/>
    <property type="evidence" value="ECO:0000318"/>
    <property type="project" value="GO_Central"/>
</dbReference>
<dbReference type="GO" id="GO:0071042">
    <property type="term" value="P:nuclear polyadenylation-dependent mRNA catabolic process"/>
    <property type="evidence" value="ECO:0000266"/>
    <property type="project" value="PomBase"/>
</dbReference>
<dbReference type="GO" id="GO:0071035">
    <property type="term" value="P:nuclear polyadenylation-dependent rRNA catabolic process"/>
    <property type="evidence" value="ECO:0000318"/>
    <property type="project" value="GO_Central"/>
</dbReference>
<dbReference type="GO" id="GO:0070478">
    <property type="term" value="P:nuclear-transcribed mRNA catabolic process, 3'-5' exonucleolytic nonsense-mediated decay"/>
    <property type="evidence" value="ECO:0000266"/>
    <property type="project" value="PomBase"/>
</dbReference>
<dbReference type="GO" id="GO:0070481">
    <property type="term" value="P:nuclear-transcribed mRNA catabolic process, non-stop decay"/>
    <property type="evidence" value="ECO:0000266"/>
    <property type="project" value="PomBase"/>
</dbReference>
<dbReference type="GO" id="GO:0016075">
    <property type="term" value="P:rRNA catabolic process"/>
    <property type="evidence" value="ECO:0000318"/>
    <property type="project" value="GO_Central"/>
</dbReference>
<dbReference type="GO" id="GO:0071038">
    <property type="term" value="P:TRAMP-dependent tRNA surveillance pathway"/>
    <property type="evidence" value="ECO:0000318"/>
    <property type="project" value="GO_Central"/>
</dbReference>
<dbReference type="GO" id="GO:0034473">
    <property type="term" value="P:U1 snRNA 3'-end processing"/>
    <property type="evidence" value="ECO:0000318"/>
    <property type="project" value="GO_Central"/>
</dbReference>
<dbReference type="GO" id="GO:0034475">
    <property type="term" value="P:U4 snRNA 3'-end processing"/>
    <property type="evidence" value="ECO:0000318"/>
    <property type="project" value="GO_Central"/>
</dbReference>
<dbReference type="GO" id="GO:0034476">
    <property type="term" value="P:U5 snRNA 3'-end processing"/>
    <property type="evidence" value="ECO:0000318"/>
    <property type="project" value="GO_Central"/>
</dbReference>
<dbReference type="CDD" id="cd11369">
    <property type="entry name" value="RNase_PH_RRP43"/>
    <property type="match status" value="1"/>
</dbReference>
<dbReference type="FunFam" id="3.30.230.70:FF:000017">
    <property type="entry name" value="Exosome complex component Rrp42"/>
    <property type="match status" value="1"/>
</dbReference>
<dbReference type="Gene3D" id="3.30.230.70">
    <property type="entry name" value="GHMP Kinase, N-terminal domain"/>
    <property type="match status" value="1"/>
</dbReference>
<dbReference type="InterPro" id="IPR001247">
    <property type="entry name" value="ExoRNase_PH_dom1"/>
</dbReference>
<dbReference type="InterPro" id="IPR015847">
    <property type="entry name" value="ExoRNase_PH_dom2"/>
</dbReference>
<dbReference type="InterPro" id="IPR036345">
    <property type="entry name" value="ExoRNase_PH_dom2_sf"/>
</dbReference>
<dbReference type="InterPro" id="IPR050590">
    <property type="entry name" value="Exosome_comp_Rrp42_subfam"/>
</dbReference>
<dbReference type="InterPro" id="IPR027408">
    <property type="entry name" value="PNPase/RNase_PH_dom_sf"/>
</dbReference>
<dbReference type="InterPro" id="IPR020568">
    <property type="entry name" value="Ribosomal_Su5_D2-typ_SF"/>
</dbReference>
<dbReference type="InterPro" id="IPR033196">
    <property type="entry name" value="Rrp43"/>
</dbReference>
<dbReference type="PANTHER" id="PTHR11097:SF9">
    <property type="entry name" value="EXOSOME COMPLEX COMPONENT RRP43"/>
    <property type="match status" value="1"/>
</dbReference>
<dbReference type="PANTHER" id="PTHR11097">
    <property type="entry name" value="EXOSOME COMPLEX EXONUCLEASE RIBOSOMAL RNA PROCESSING PROTEIN"/>
    <property type="match status" value="1"/>
</dbReference>
<dbReference type="Pfam" id="PF01138">
    <property type="entry name" value="RNase_PH"/>
    <property type="match status" value="1"/>
</dbReference>
<dbReference type="Pfam" id="PF03725">
    <property type="entry name" value="RNase_PH_C"/>
    <property type="match status" value="1"/>
</dbReference>
<dbReference type="SUPFAM" id="SSF55666">
    <property type="entry name" value="Ribonuclease PH domain 2-like"/>
    <property type="match status" value="1"/>
</dbReference>
<dbReference type="SUPFAM" id="SSF54211">
    <property type="entry name" value="Ribosomal protein S5 domain 2-like"/>
    <property type="match status" value="1"/>
</dbReference>
<accession>Q10205</accession>
<organism>
    <name type="scientific">Schizosaccharomyces pombe (strain 972 / ATCC 24843)</name>
    <name type="common">Fission yeast</name>
    <dbReference type="NCBI Taxonomy" id="284812"/>
    <lineage>
        <taxon>Eukaryota</taxon>
        <taxon>Fungi</taxon>
        <taxon>Dikarya</taxon>
        <taxon>Ascomycota</taxon>
        <taxon>Taphrinomycotina</taxon>
        <taxon>Schizosaccharomycetes</taxon>
        <taxon>Schizosaccharomycetales</taxon>
        <taxon>Schizosaccharomycetaceae</taxon>
        <taxon>Schizosaccharomyces</taxon>
    </lineage>
</organism>
<protein>
    <recommendedName>
        <fullName>Exosome complex component rrp43</fullName>
    </recommendedName>
    <alternativeName>
        <fullName>Ribosomal RNA-processing protein 43</fullName>
    </alternativeName>
</protein>
<feature type="chain" id="PRO_0000139969" description="Exosome complex component rrp43">
    <location>
        <begin position="1"/>
        <end position="270"/>
    </location>
</feature>
<gene>
    <name type="primary">rrp43</name>
    <name type="ORF">SPBC17D1.03c</name>
</gene>
<sequence>MKTVSGVKQLSFTPSIFKKITPEQYLSHLLNQDVRSDGRSVSEFREIVINDNCISTANGSAIIRAGENVFVCGIKAEIAEPFENSPNEGWIVPNLELSPLCSSKFKPGPPSDLAQVVSQELHQTLQQSNLINLQSLCIFEKKAAWVLYADIICLNYDGSAFDYAWAALFAALKTVKLPTAVWDEDLERVICASTLTRPVQLSTEVRSFSWSVFDDKLLADPTDEEEDLSTEFLTIMLNSSKNIVKIIKLGGTHIQPLLLKKCIEVARSKF</sequence>
<name>RRP43_SCHPO</name>
<reference key="1">
    <citation type="journal article" date="2002" name="Nature">
        <title>The genome sequence of Schizosaccharomyces pombe.</title>
        <authorList>
            <person name="Wood V."/>
            <person name="Gwilliam R."/>
            <person name="Rajandream M.A."/>
            <person name="Lyne M.H."/>
            <person name="Lyne R."/>
            <person name="Stewart A."/>
            <person name="Sgouros J.G."/>
            <person name="Peat N."/>
            <person name="Hayles J."/>
            <person name="Baker S.G."/>
            <person name="Basham D."/>
            <person name="Bowman S."/>
            <person name="Brooks K."/>
            <person name="Brown D."/>
            <person name="Brown S."/>
            <person name="Chillingworth T."/>
            <person name="Churcher C.M."/>
            <person name="Collins M."/>
            <person name="Connor R."/>
            <person name="Cronin A."/>
            <person name="Davis P."/>
            <person name="Feltwell T."/>
            <person name="Fraser A."/>
            <person name="Gentles S."/>
            <person name="Goble A."/>
            <person name="Hamlin N."/>
            <person name="Harris D.E."/>
            <person name="Hidalgo J."/>
            <person name="Hodgson G."/>
            <person name="Holroyd S."/>
            <person name="Hornsby T."/>
            <person name="Howarth S."/>
            <person name="Huckle E.J."/>
            <person name="Hunt S."/>
            <person name="Jagels K."/>
            <person name="James K.D."/>
            <person name="Jones L."/>
            <person name="Jones M."/>
            <person name="Leather S."/>
            <person name="McDonald S."/>
            <person name="McLean J."/>
            <person name="Mooney P."/>
            <person name="Moule S."/>
            <person name="Mungall K.L."/>
            <person name="Murphy L.D."/>
            <person name="Niblett D."/>
            <person name="Odell C."/>
            <person name="Oliver K."/>
            <person name="O'Neil S."/>
            <person name="Pearson D."/>
            <person name="Quail M.A."/>
            <person name="Rabbinowitsch E."/>
            <person name="Rutherford K.M."/>
            <person name="Rutter S."/>
            <person name="Saunders D."/>
            <person name="Seeger K."/>
            <person name="Sharp S."/>
            <person name="Skelton J."/>
            <person name="Simmonds M.N."/>
            <person name="Squares R."/>
            <person name="Squares S."/>
            <person name="Stevens K."/>
            <person name="Taylor K."/>
            <person name="Taylor R.G."/>
            <person name="Tivey A."/>
            <person name="Walsh S.V."/>
            <person name="Warren T."/>
            <person name="Whitehead S."/>
            <person name="Woodward J.R."/>
            <person name="Volckaert G."/>
            <person name="Aert R."/>
            <person name="Robben J."/>
            <person name="Grymonprez B."/>
            <person name="Weltjens I."/>
            <person name="Vanstreels E."/>
            <person name="Rieger M."/>
            <person name="Schaefer M."/>
            <person name="Mueller-Auer S."/>
            <person name="Gabel C."/>
            <person name="Fuchs M."/>
            <person name="Duesterhoeft A."/>
            <person name="Fritzc C."/>
            <person name="Holzer E."/>
            <person name="Moestl D."/>
            <person name="Hilbert H."/>
            <person name="Borzym K."/>
            <person name="Langer I."/>
            <person name="Beck A."/>
            <person name="Lehrach H."/>
            <person name="Reinhardt R."/>
            <person name="Pohl T.M."/>
            <person name="Eger P."/>
            <person name="Zimmermann W."/>
            <person name="Wedler H."/>
            <person name="Wambutt R."/>
            <person name="Purnelle B."/>
            <person name="Goffeau A."/>
            <person name="Cadieu E."/>
            <person name="Dreano S."/>
            <person name="Gloux S."/>
            <person name="Lelaure V."/>
            <person name="Mottier S."/>
            <person name="Galibert F."/>
            <person name="Aves S.J."/>
            <person name="Xiang Z."/>
            <person name="Hunt C."/>
            <person name="Moore K."/>
            <person name="Hurst S.M."/>
            <person name="Lucas M."/>
            <person name="Rochet M."/>
            <person name="Gaillardin C."/>
            <person name="Tallada V.A."/>
            <person name="Garzon A."/>
            <person name="Thode G."/>
            <person name="Daga R.R."/>
            <person name="Cruzado L."/>
            <person name="Jimenez J."/>
            <person name="Sanchez M."/>
            <person name="del Rey F."/>
            <person name="Benito J."/>
            <person name="Dominguez A."/>
            <person name="Revuelta J.L."/>
            <person name="Moreno S."/>
            <person name="Armstrong J."/>
            <person name="Forsburg S.L."/>
            <person name="Cerutti L."/>
            <person name="Lowe T."/>
            <person name="McCombie W.R."/>
            <person name="Paulsen I."/>
            <person name="Potashkin J."/>
            <person name="Shpakovski G.V."/>
            <person name="Ussery D."/>
            <person name="Barrell B.G."/>
            <person name="Nurse P."/>
        </authorList>
    </citation>
    <scope>NUCLEOTIDE SEQUENCE [LARGE SCALE GENOMIC DNA]</scope>
    <source>
        <strain>972 / ATCC 24843</strain>
    </source>
</reference>
<reference key="2">
    <citation type="journal article" date="2006" name="Nat. Biotechnol.">
        <title>ORFeome cloning and global analysis of protein localization in the fission yeast Schizosaccharomyces pombe.</title>
        <authorList>
            <person name="Matsuyama A."/>
            <person name="Arai R."/>
            <person name="Yashiroda Y."/>
            <person name="Shirai A."/>
            <person name="Kamata A."/>
            <person name="Sekido S."/>
            <person name="Kobayashi Y."/>
            <person name="Hashimoto A."/>
            <person name="Hamamoto M."/>
            <person name="Hiraoka Y."/>
            <person name="Horinouchi S."/>
            <person name="Yoshida M."/>
        </authorList>
    </citation>
    <scope>SUBCELLULAR LOCATION [LARGE SCALE ANALYSIS]</scope>
</reference>
<evidence type="ECO:0000250" key="1">
    <source>
        <dbReference type="UniProtKB" id="P25359"/>
    </source>
</evidence>
<evidence type="ECO:0000269" key="2">
    <source>
    </source>
</evidence>
<evidence type="ECO:0000305" key="3"/>
<keyword id="KW-0963">Cytoplasm</keyword>
<keyword id="KW-0271">Exosome</keyword>
<keyword id="KW-0539">Nucleus</keyword>
<keyword id="KW-1185">Reference proteome</keyword>
<keyword id="KW-0694">RNA-binding</keyword>
<keyword id="KW-0698">rRNA processing</keyword>
<proteinExistence type="inferred from homology"/>
<comment type="function">
    <text evidence="1">Non-catalytic component of the RNA exosome complex which has 3'-&gt;5' exoribonuclease activity and participates in a multitude of cellular RNA processing and degradation events. In the nucleus, the RNA exosome complex is involved in proper maturation of stable RNA species such as rRNA, snRNA and snoRNA, in the elimination of RNA processing by-products and non-coding 'pervasive' transcripts, such as antisense RNA species and cryptic unstable transcripts (CUTs), and of mRNAs with processing defects, thereby limiting or excluding their export to the cytoplasm. In the cytoplasm, the RNA exosome complex is involved in general mRNA turnover and in RNA surveillance pathways, preventing translation of aberrant mRNAs. The catalytic inactive RNA exosome core complex of 9 subunits (Exo-9) is proposed to play a pivotal role in the binding and presentation of RNA for ribonucleolysis, and to serve as a scaffold for the association with catalytic subunits and accessory proteins or complexes. ski6 is part of the hexameric ring of RNase PH domain-containing subunits proposed to form a central channel which threads RNA substrates for degradation (By similarity).</text>
</comment>
<comment type="subunit">
    <text evidence="1">Component of the RNA exosome complex. Specifically part of the catalytically inactive RNA exosome core complex (Exo-9) which may associate with the catalytic subunits rrp66 and dis3 in cytoplasmic- and nuclear-specific RNA exosome complex forms. Exo-9 is formed by a hexameric base ring of RNase PH domain-containing subunits and a cap ring consisting of csl4, rrp4 and rrp40.</text>
</comment>
<comment type="subcellular location">
    <subcellularLocation>
        <location evidence="2">Cytoplasm</location>
    </subcellularLocation>
    <subcellularLocation>
        <location evidence="2">Nucleus</location>
        <location evidence="2">Nucleolus</location>
    </subcellularLocation>
</comment>
<comment type="similarity">
    <text evidence="3">Belongs to the RNase PH family.</text>
</comment>